<name>DCTA_XANCP</name>
<proteinExistence type="inferred from homology"/>
<accession>Q8P5J5</accession>
<comment type="function">
    <text evidence="1">Responsible for the transport of dicarboxylates such as succinate, fumarate, and malate from the periplasm across the membrane.</text>
</comment>
<comment type="subcellular location">
    <subcellularLocation>
        <location evidence="1">Cell inner membrane</location>
        <topology evidence="1">Multi-pass membrane protein</topology>
    </subcellularLocation>
</comment>
<comment type="similarity">
    <text evidence="1">Belongs to the dicarboxylate/amino acid:cation symporter (DAACS) (TC 2.A.23) family.</text>
</comment>
<protein>
    <recommendedName>
        <fullName evidence="1">C4-dicarboxylate transport protein</fullName>
    </recommendedName>
</protein>
<keyword id="KW-0997">Cell inner membrane</keyword>
<keyword id="KW-1003">Cell membrane</keyword>
<keyword id="KW-0472">Membrane</keyword>
<keyword id="KW-1185">Reference proteome</keyword>
<keyword id="KW-0769">Symport</keyword>
<keyword id="KW-0812">Transmembrane</keyword>
<keyword id="KW-1133">Transmembrane helix</keyword>
<keyword id="KW-0813">Transport</keyword>
<reference key="1">
    <citation type="journal article" date="2002" name="Nature">
        <title>Comparison of the genomes of two Xanthomonas pathogens with differing host specificities.</title>
        <authorList>
            <person name="da Silva A.C.R."/>
            <person name="Ferro J.A."/>
            <person name="Reinach F.C."/>
            <person name="Farah C.S."/>
            <person name="Furlan L.R."/>
            <person name="Quaggio R.B."/>
            <person name="Monteiro-Vitorello C.B."/>
            <person name="Van Sluys M.A."/>
            <person name="Almeida N.F. Jr."/>
            <person name="Alves L.M.C."/>
            <person name="do Amaral A.M."/>
            <person name="Bertolini M.C."/>
            <person name="Camargo L.E.A."/>
            <person name="Camarotte G."/>
            <person name="Cannavan F."/>
            <person name="Cardozo J."/>
            <person name="Chambergo F."/>
            <person name="Ciapina L.P."/>
            <person name="Cicarelli R.M.B."/>
            <person name="Coutinho L.L."/>
            <person name="Cursino-Santos J.R."/>
            <person name="El-Dorry H."/>
            <person name="Faria J.B."/>
            <person name="Ferreira A.J.S."/>
            <person name="Ferreira R.C.C."/>
            <person name="Ferro M.I.T."/>
            <person name="Formighieri E.F."/>
            <person name="Franco M.C."/>
            <person name="Greggio C.C."/>
            <person name="Gruber A."/>
            <person name="Katsuyama A.M."/>
            <person name="Kishi L.T."/>
            <person name="Leite R.P."/>
            <person name="Lemos E.G.M."/>
            <person name="Lemos M.V.F."/>
            <person name="Locali E.C."/>
            <person name="Machado M.A."/>
            <person name="Madeira A.M.B.N."/>
            <person name="Martinez-Rossi N.M."/>
            <person name="Martins E.C."/>
            <person name="Meidanis J."/>
            <person name="Menck C.F.M."/>
            <person name="Miyaki C.Y."/>
            <person name="Moon D.H."/>
            <person name="Moreira L.M."/>
            <person name="Novo M.T.M."/>
            <person name="Okura V.K."/>
            <person name="Oliveira M.C."/>
            <person name="Oliveira V.R."/>
            <person name="Pereira H.A."/>
            <person name="Rossi A."/>
            <person name="Sena J.A.D."/>
            <person name="Silva C."/>
            <person name="de Souza R.F."/>
            <person name="Spinola L.A.F."/>
            <person name="Takita M.A."/>
            <person name="Tamura R.E."/>
            <person name="Teixeira E.C."/>
            <person name="Tezza R.I.D."/>
            <person name="Trindade dos Santos M."/>
            <person name="Truffi D."/>
            <person name="Tsai S.M."/>
            <person name="White F.F."/>
            <person name="Setubal J.C."/>
            <person name="Kitajima J.P."/>
        </authorList>
    </citation>
    <scope>NUCLEOTIDE SEQUENCE [LARGE SCALE GENOMIC DNA]</scope>
    <source>
        <strain>ATCC 33913 / DSM 3586 / NCPPB 528 / LMG 568 / P 25</strain>
    </source>
</reference>
<feature type="chain" id="PRO_0000202114" description="C4-dicarboxylate transport protein">
    <location>
        <begin position="1"/>
        <end position="448"/>
    </location>
</feature>
<feature type="transmembrane region" description="Helical" evidence="1">
    <location>
        <begin position="20"/>
        <end position="42"/>
    </location>
</feature>
<feature type="transmembrane region" description="Helical" evidence="1">
    <location>
        <begin position="51"/>
        <end position="73"/>
    </location>
</feature>
<feature type="transmembrane region" description="Helical" evidence="1">
    <location>
        <begin position="88"/>
        <end position="110"/>
    </location>
</feature>
<feature type="transmembrane region" description="Helical" evidence="1">
    <location>
        <begin position="138"/>
        <end position="157"/>
    </location>
</feature>
<feature type="transmembrane region" description="Helical" evidence="1">
    <location>
        <begin position="161"/>
        <end position="178"/>
    </location>
</feature>
<feature type="transmembrane region" description="Helical" evidence="1">
    <location>
        <begin position="198"/>
        <end position="220"/>
    </location>
</feature>
<feature type="transmembrane region" description="Helical" evidence="1">
    <location>
        <begin position="230"/>
        <end position="252"/>
    </location>
</feature>
<feature type="region of interest" description="Disordered" evidence="2">
    <location>
        <begin position="428"/>
        <end position="448"/>
    </location>
</feature>
<feature type="compositionally biased region" description="Pro residues" evidence="2">
    <location>
        <begin position="432"/>
        <end position="441"/>
    </location>
</feature>
<sequence length="448" mass="47406">MHISKPAGPLPAPVPFYRQLYFQVVVAIVLGALLGHFEPAFAESLKPLGDAFIKLVKMIIAPVIFLTIVTGIAGMTHLKTVGRVFAKSMTYFLFFSTLALIVGMVVAHVVQPGAGMNINPAELDQSAVNTYVQKSHELSLVGFLMDIIPATLISAFVDGNILQVLFVAVLFGIALALVGERGRPVLSFLEALTAPVFRLVHMLMKAAPIGAFGAIAFTIGKYGVESLVNLAWLVGSFYLTSLFFVLVILGIVCRLCGFSVLKLIRYLKAELLLVLGTSSSESALPSLMEKMEKAGCEKSVVGLVVPTGYSFNLDGTNIYMTLAALFIAQATNVDLTLGQQITLLAVAMLSSKGAAGVTGAGFITLAATLSVVPDVPVAGMALILGVDRFMSECRSLTNFIGNAVATVVVSRWENALDRDQLSLALDGRAPPLQAPVPPPDAVAPVSAR</sequence>
<dbReference type="EMBL" id="AE008922">
    <property type="protein sequence ID" value="AAM42616.1"/>
    <property type="molecule type" value="Genomic_DNA"/>
</dbReference>
<dbReference type="RefSeq" id="NP_638692.1">
    <property type="nucleotide sequence ID" value="NC_003902.1"/>
</dbReference>
<dbReference type="RefSeq" id="WP_011038444.1">
    <property type="nucleotide sequence ID" value="NC_003902.1"/>
</dbReference>
<dbReference type="SMR" id="Q8P5J5"/>
<dbReference type="STRING" id="190485.XCC3346"/>
<dbReference type="EnsemblBacteria" id="AAM42616">
    <property type="protein sequence ID" value="AAM42616"/>
    <property type="gene ID" value="XCC3346"/>
</dbReference>
<dbReference type="KEGG" id="xcc:XCC3346"/>
<dbReference type="PATRIC" id="fig|190485.4.peg.3578"/>
<dbReference type="eggNOG" id="COG1301">
    <property type="taxonomic scope" value="Bacteria"/>
</dbReference>
<dbReference type="HOGENOM" id="CLU_019375_7_0_6"/>
<dbReference type="OrthoDB" id="9766690at2"/>
<dbReference type="Proteomes" id="UP000001010">
    <property type="component" value="Chromosome"/>
</dbReference>
<dbReference type="GO" id="GO:0005886">
    <property type="term" value="C:plasma membrane"/>
    <property type="evidence" value="ECO:0000318"/>
    <property type="project" value="GO_Central"/>
</dbReference>
<dbReference type="GO" id="GO:0015138">
    <property type="term" value="F:fumarate transmembrane transporter activity"/>
    <property type="evidence" value="ECO:0000318"/>
    <property type="project" value="GO_Central"/>
</dbReference>
<dbReference type="GO" id="GO:0015366">
    <property type="term" value="F:malate:proton symporter activity"/>
    <property type="evidence" value="ECO:0000318"/>
    <property type="project" value="GO_Central"/>
</dbReference>
<dbReference type="GO" id="GO:0015141">
    <property type="term" value="F:succinate transmembrane transporter activity"/>
    <property type="evidence" value="ECO:0000318"/>
    <property type="project" value="GO_Central"/>
</dbReference>
<dbReference type="GO" id="GO:0070778">
    <property type="term" value="P:L-aspartate transmembrane transport"/>
    <property type="evidence" value="ECO:0000318"/>
    <property type="project" value="GO_Central"/>
</dbReference>
<dbReference type="FunFam" id="1.10.3860.10:FF:000001">
    <property type="entry name" value="C4-dicarboxylate transport protein"/>
    <property type="match status" value="1"/>
</dbReference>
<dbReference type="Gene3D" id="1.10.3860.10">
    <property type="entry name" value="Sodium:dicarboxylate symporter"/>
    <property type="match status" value="1"/>
</dbReference>
<dbReference type="HAMAP" id="MF_01300">
    <property type="entry name" value="C4_dicarb_transport"/>
    <property type="match status" value="1"/>
</dbReference>
<dbReference type="InterPro" id="IPR023954">
    <property type="entry name" value="C4_dicarb_transport"/>
</dbReference>
<dbReference type="InterPro" id="IPR001991">
    <property type="entry name" value="Na-dicarboxylate_symporter"/>
</dbReference>
<dbReference type="InterPro" id="IPR018107">
    <property type="entry name" value="Na-dicarboxylate_symporter_CS"/>
</dbReference>
<dbReference type="InterPro" id="IPR036458">
    <property type="entry name" value="Na:dicarbo_symporter_sf"/>
</dbReference>
<dbReference type="NCBIfam" id="NF002461">
    <property type="entry name" value="PRK01663.1"/>
    <property type="match status" value="1"/>
</dbReference>
<dbReference type="NCBIfam" id="NF009587">
    <property type="entry name" value="PRK13027.1"/>
    <property type="match status" value="1"/>
</dbReference>
<dbReference type="PANTHER" id="PTHR42865:SF1">
    <property type="entry name" value="AEROBIC C4-DICARBOXYLATE TRANSPORT PROTEIN"/>
    <property type="match status" value="1"/>
</dbReference>
<dbReference type="PANTHER" id="PTHR42865">
    <property type="entry name" value="PROTON/GLUTAMATE-ASPARTATE SYMPORTER"/>
    <property type="match status" value="1"/>
</dbReference>
<dbReference type="Pfam" id="PF00375">
    <property type="entry name" value="SDF"/>
    <property type="match status" value="1"/>
</dbReference>
<dbReference type="PRINTS" id="PR00173">
    <property type="entry name" value="EDTRNSPORT"/>
</dbReference>
<dbReference type="SUPFAM" id="SSF118215">
    <property type="entry name" value="Proton glutamate symport protein"/>
    <property type="match status" value="1"/>
</dbReference>
<dbReference type="PROSITE" id="PS00713">
    <property type="entry name" value="NA_DICARBOXYL_SYMP_1"/>
    <property type="match status" value="1"/>
</dbReference>
<dbReference type="PROSITE" id="PS00714">
    <property type="entry name" value="NA_DICARBOXYL_SYMP_2"/>
    <property type="match status" value="1"/>
</dbReference>
<gene>
    <name evidence="1" type="primary">dctA</name>
    <name type="ordered locus">XCC3346</name>
</gene>
<organism>
    <name type="scientific">Xanthomonas campestris pv. campestris (strain ATCC 33913 / DSM 3586 / NCPPB 528 / LMG 568 / P 25)</name>
    <dbReference type="NCBI Taxonomy" id="190485"/>
    <lineage>
        <taxon>Bacteria</taxon>
        <taxon>Pseudomonadati</taxon>
        <taxon>Pseudomonadota</taxon>
        <taxon>Gammaproteobacteria</taxon>
        <taxon>Lysobacterales</taxon>
        <taxon>Lysobacteraceae</taxon>
        <taxon>Xanthomonas</taxon>
    </lineage>
</organism>
<evidence type="ECO:0000255" key="1">
    <source>
        <dbReference type="HAMAP-Rule" id="MF_01300"/>
    </source>
</evidence>
<evidence type="ECO:0000256" key="2">
    <source>
        <dbReference type="SAM" id="MobiDB-lite"/>
    </source>
</evidence>